<name>HIS1_NITSB</name>
<accession>A6Q469</accession>
<comment type="function">
    <text evidence="1">Catalyzes the condensation of ATP and 5-phosphoribose 1-diphosphate to form N'-(5'-phosphoribosyl)-ATP (PR-ATP). Has a crucial role in the pathway because the rate of histidine biosynthesis seems to be controlled primarily by regulation of HisG enzymatic activity.</text>
</comment>
<comment type="catalytic activity">
    <reaction evidence="1">
        <text>1-(5-phospho-beta-D-ribosyl)-ATP + diphosphate = 5-phospho-alpha-D-ribose 1-diphosphate + ATP</text>
        <dbReference type="Rhea" id="RHEA:18473"/>
        <dbReference type="ChEBI" id="CHEBI:30616"/>
        <dbReference type="ChEBI" id="CHEBI:33019"/>
        <dbReference type="ChEBI" id="CHEBI:58017"/>
        <dbReference type="ChEBI" id="CHEBI:73183"/>
        <dbReference type="EC" id="2.4.2.17"/>
    </reaction>
</comment>
<comment type="pathway">
    <text evidence="1">Amino-acid biosynthesis; L-histidine biosynthesis; L-histidine from 5-phospho-alpha-D-ribose 1-diphosphate: step 1/9.</text>
</comment>
<comment type="subunit">
    <text evidence="1">Heteromultimer composed of HisG and HisZ subunits.</text>
</comment>
<comment type="subcellular location">
    <subcellularLocation>
        <location evidence="1">Cytoplasm</location>
    </subcellularLocation>
</comment>
<comment type="domain">
    <text>Lacks the C-terminal regulatory region which is replaced by HisZ.</text>
</comment>
<comment type="similarity">
    <text evidence="1">Belongs to the ATP phosphoribosyltransferase family. Short subfamily.</text>
</comment>
<gene>
    <name evidence="1" type="primary">hisG</name>
    <name type="ordered locus">NIS_1169</name>
</gene>
<evidence type="ECO:0000255" key="1">
    <source>
        <dbReference type="HAMAP-Rule" id="MF_01018"/>
    </source>
</evidence>
<protein>
    <recommendedName>
        <fullName evidence="1">ATP phosphoribosyltransferase</fullName>
        <shortName evidence="1">ATP-PRT</shortName>
        <shortName evidence="1">ATP-PRTase</shortName>
        <ecNumber evidence="1">2.4.2.17</ecNumber>
    </recommendedName>
</protein>
<reference key="1">
    <citation type="journal article" date="2007" name="Proc. Natl. Acad. Sci. U.S.A.">
        <title>Deep-sea vent epsilon-proteobacterial genomes provide insights into emergence of pathogens.</title>
        <authorList>
            <person name="Nakagawa S."/>
            <person name="Takaki Y."/>
            <person name="Shimamura S."/>
            <person name="Reysenbach A.-L."/>
            <person name="Takai K."/>
            <person name="Horikoshi K."/>
        </authorList>
    </citation>
    <scope>NUCLEOTIDE SEQUENCE [LARGE SCALE GENOMIC DNA]</scope>
    <source>
        <strain>SB155-2</strain>
    </source>
</reference>
<organism>
    <name type="scientific">Nitratiruptor sp. (strain SB155-2)</name>
    <dbReference type="NCBI Taxonomy" id="387092"/>
    <lineage>
        <taxon>Bacteria</taxon>
        <taxon>Pseudomonadati</taxon>
        <taxon>Campylobacterota</taxon>
        <taxon>Epsilonproteobacteria</taxon>
        <taxon>Nautiliales</taxon>
        <taxon>Nitratiruptoraceae</taxon>
        <taxon>Nitratiruptor</taxon>
    </lineage>
</organism>
<proteinExistence type="inferred from homology"/>
<sequence>MLTIALPKGRIGEDSLALFEKIFDTKFEFGKRKLILEAGGFRFMKVRNQDVPTYVYHQAADLGIVGLDVLEEKRLDIMRLLDLGFGRCDICIGIKAEESLDFSKPSYKVATKMENITRDFFSKKAIPVEIIKLYGSIELAPLVGLADMIVDIVETGETMRQNGLKPALKIMESSAFLIANKNSFYQKKAQILHLREQMSKVLYGS</sequence>
<feature type="chain" id="PRO_1000063289" description="ATP phosphoribosyltransferase">
    <location>
        <begin position="1"/>
        <end position="205"/>
    </location>
</feature>
<keyword id="KW-0028">Amino-acid biosynthesis</keyword>
<keyword id="KW-0067">ATP-binding</keyword>
<keyword id="KW-0963">Cytoplasm</keyword>
<keyword id="KW-0328">Glycosyltransferase</keyword>
<keyword id="KW-0368">Histidine biosynthesis</keyword>
<keyword id="KW-0547">Nucleotide-binding</keyword>
<keyword id="KW-1185">Reference proteome</keyword>
<keyword id="KW-0808">Transferase</keyword>
<dbReference type="EC" id="2.4.2.17" evidence="1"/>
<dbReference type="EMBL" id="AP009178">
    <property type="protein sequence ID" value="BAF70278.1"/>
    <property type="molecule type" value="Genomic_DNA"/>
</dbReference>
<dbReference type="RefSeq" id="WP_012082541.1">
    <property type="nucleotide sequence ID" value="NC_009662.1"/>
</dbReference>
<dbReference type="SMR" id="A6Q469"/>
<dbReference type="FunCoup" id="A6Q469">
    <property type="interactions" value="404"/>
</dbReference>
<dbReference type="STRING" id="387092.NIS_1169"/>
<dbReference type="KEGG" id="nis:NIS_1169"/>
<dbReference type="eggNOG" id="COG0040">
    <property type="taxonomic scope" value="Bacteria"/>
</dbReference>
<dbReference type="HOGENOM" id="CLU_038115_2_0_7"/>
<dbReference type="InParanoid" id="A6Q469"/>
<dbReference type="OrthoDB" id="9801867at2"/>
<dbReference type="UniPathway" id="UPA00031">
    <property type="reaction ID" value="UER00006"/>
</dbReference>
<dbReference type="Proteomes" id="UP000001118">
    <property type="component" value="Chromosome"/>
</dbReference>
<dbReference type="GO" id="GO:0005737">
    <property type="term" value="C:cytoplasm"/>
    <property type="evidence" value="ECO:0007669"/>
    <property type="project" value="UniProtKB-SubCell"/>
</dbReference>
<dbReference type="GO" id="GO:0005524">
    <property type="term" value="F:ATP binding"/>
    <property type="evidence" value="ECO:0007669"/>
    <property type="project" value="UniProtKB-KW"/>
</dbReference>
<dbReference type="GO" id="GO:0003879">
    <property type="term" value="F:ATP phosphoribosyltransferase activity"/>
    <property type="evidence" value="ECO:0007669"/>
    <property type="project" value="UniProtKB-UniRule"/>
</dbReference>
<dbReference type="GO" id="GO:0000105">
    <property type="term" value="P:L-histidine biosynthetic process"/>
    <property type="evidence" value="ECO:0007669"/>
    <property type="project" value="UniProtKB-UniRule"/>
</dbReference>
<dbReference type="CDD" id="cd13595">
    <property type="entry name" value="PBP2_HisGs"/>
    <property type="match status" value="1"/>
</dbReference>
<dbReference type="Gene3D" id="3.40.190.10">
    <property type="entry name" value="Periplasmic binding protein-like II"/>
    <property type="match status" value="2"/>
</dbReference>
<dbReference type="HAMAP" id="MF_01018">
    <property type="entry name" value="HisG_Short"/>
    <property type="match status" value="1"/>
</dbReference>
<dbReference type="InterPro" id="IPR013820">
    <property type="entry name" value="ATP_PRibTrfase_cat"/>
</dbReference>
<dbReference type="InterPro" id="IPR018198">
    <property type="entry name" value="ATP_PRibTrfase_CS"/>
</dbReference>
<dbReference type="InterPro" id="IPR001348">
    <property type="entry name" value="ATP_PRibTrfase_HisG"/>
</dbReference>
<dbReference type="InterPro" id="IPR024893">
    <property type="entry name" value="ATP_PRibTrfase_HisG_short"/>
</dbReference>
<dbReference type="NCBIfam" id="TIGR00070">
    <property type="entry name" value="hisG"/>
    <property type="match status" value="1"/>
</dbReference>
<dbReference type="PANTHER" id="PTHR21403:SF8">
    <property type="entry name" value="ATP PHOSPHORIBOSYLTRANSFERASE"/>
    <property type="match status" value="1"/>
</dbReference>
<dbReference type="PANTHER" id="PTHR21403">
    <property type="entry name" value="ATP PHOSPHORIBOSYLTRANSFERASE ATP-PRTASE"/>
    <property type="match status" value="1"/>
</dbReference>
<dbReference type="Pfam" id="PF01634">
    <property type="entry name" value="HisG"/>
    <property type="match status" value="1"/>
</dbReference>
<dbReference type="SUPFAM" id="SSF53850">
    <property type="entry name" value="Periplasmic binding protein-like II"/>
    <property type="match status" value="1"/>
</dbReference>
<dbReference type="PROSITE" id="PS01316">
    <property type="entry name" value="ATP_P_PHORIBOSYLTR"/>
    <property type="match status" value="1"/>
</dbReference>